<dbReference type="EMBL" id="CP000036">
    <property type="protein sequence ID" value="ABB67725.1"/>
    <property type="molecule type" value="Genomic_DNA"/>
</dbReference>
<dbReference type="RefSeq" id="WP_000449039.1">
    <property type="nucleotide sequence ID" value="NC_007613.1"/>
</dbReference>
<dbReference type="SMR" id="Q31W33"/>
<dbReference type="KEGG" id="sbo:SBO_3228"/>
<dbReference type="HOGENOM" id="CLU_105087_3_0_6"/>
<dbReference type="Proteomes" id="UP000007067">
    <property type="component" value="Chromosome"/>
</dbReference>
<dbReference type="FunFam" id="2.30.110.10:FF:000003">
    <property type="entry name" value="UPF0306 protein YhbP"/>
    <property type="match status" value="1"/>
</dbReference>
<dbReference type="Gene3D" id="2.30.110.10">
    <property type="entry name" value="Electron Transport, Fmn-binding Protein, Chain A"/>
    <property type="match status" value="1"/>
</dbReference>
<dbReference type="HAMAP" id="MF_00764">
    <property type="entry name" value="UPF0306"/>
    <property type="match status" value="1"/>
</dbReference>
<dbReference type="InterPro" id="IPR012349">
    <property type="entry name" value="Split_barrel_FMN-bd"/>
</dbReference>
<dbReference type="InterPro" id="IPR011194">
    <property type="entry name" value="UPF0306"/>
</dbReference>
<dbReference type="NCBIfam" id="NF002900">
    <property type="entry name" value="PRK03467.1"/>
    <property type="match status" value="1"/>
</dbReference>
<dbReference type="PIRSF" id="PIRSF009554">
    <property type="entry name" value="UCP009554"/>
    <property type="match status" value="1"/>
</dbReference>
<dbReference type="SUPFAM" id="SSF50475">
    <property type="entry name" value="FMN-binding split barrel"/>
    <property type="match status" value="1"/>
</dbReference>
<evidence type="ECO:0000255" key="1">
    <source>
        <dbReference type="HAMAP-Rule" id="MF_00764"/>
    </source>
</evidence>
<accession>Q31W33</accession>
<sequence>METLITISRWLAKQHVVTWCVQQEGELWCANAFYLFDAQKVAFYILTEEKTRHAQMSGPQAAVAGTVNGQPKTVALIRGVQFKGEIRRLEGEESDLARKAYNHRFPVARMLSAPVWEIRLDEIKFTDNTLGFGKKMIWLRDSGTEQA</sequence>
<protein>
    <recommendedName>
        <fullName evidence="1">UPF0306 protein YhbP</fullName>
    </recommendedName>
</protein>
<gene>
    <name evidence="1" type="primary">yhbP</name>
    <name type="ordered locus">SBO_3228</name>
</gene>
<organism>
    <name type="scientific">Shigella boydii serotype 4 (strain Sb227)</name>
    <dbReference type="NCBI Taxonomy" id="300268"/>
    <lineage>
        <taxon>Bacteria</taxon>
        <taxon>Pseudomonadati</taxon>
        <taxon>Pseudomonadota</taxon>
        <taxon>Gammaproteobacteria</taxon>
        <taxon>Enterobacterales</taxon>
        <taxon>Enterobacteriaceae</taxon>
        <taxon>Shigella</taxon>
    </lineage>
</organism>
<name>YHBP_SHIBS</name>
<proteinExistence type="inferred from homology"/>
<reference key="1">
    <citation type="journal article" date="2005" name="Nucleic Acids Res.">
        <title>Genome dynamics and diversity of Shigella species, the etiologic agents of bacillary dysentery.</title>
        <authorList>
            <person name="Yang F."/>
            <person name="Yang J."/>
            <person name="Zhang X."/>
            <person name="Chen L."/>
            <person name="Jiang Y."/>
            <person name="Yan Y."/>
            <person name="Tang X."/>
            <person name="Wang J."/>
            <person name="Xiong Z."/>
            <person name="Dong J."/>
            <person name="Xue Y."/>
            <person name="Zhu Y."/>
            <person name="Xu X."/>
            <person name="Sun L."/>
            <person name="Chen S."/>
            <person name="Nie H."/>
            <person name="Peng J."/>
            <person name="Xu J."/>
            <person name="Wang Y."/>
            <person name="Yuan Z."/>
            <person name="Wen Y."/>
            <person name="Yao Z."/>
            <person name="Shen Y."/>
            <person name="Qiang B."/>
            <person name="Hou Y."/>
            <person name="Yu J."/>
            <person name="Jin Q."/>
        </authorList>
    </citation>
    <scope>NUCLEOTIDE SEQUENCE [LARGE SCALE GENOMIC DNA]</scope>
    <source>
        <strain>Sb227</strain>
    </source>
</reference>
<comment type="similarity">
    <text evidence="1">Belongs to the UPF0306 family.</text>
</comment>
<feature type="chain" id="PRO_1000046782" description="UPF0306 protein YhbP">
    <location>
        <begin position="1"/>
        <end position="147"/>
    </location>
</feature>